<feature type="chain" id="PRO_1000093504" description="Peptide chain release factor 1">
    <location>
        <begin position="1"/>
        <end position="361"/>
    </location>
</feature>
<feature type="region of interest" description="Disordered" evidence="2">
    <location>
        <begin position="283"/>
        <end position="305"/>
    </location>
</feature>
<feature type="compositionally biased region" description="Basic and acidic residues" evidence="2">
    <location>
        <begin position="283"/>
        <end position="296"/>
    </location>
</feature>
<feature type="modified residue" description="N5-methylglutamine" evidence="1">
    <location>
        <position position="237"/>
    </location>
</feature>
<proteinExistence type="inferred from homology"/>
<sequence>MKDSVIRKLEGLLERNEEVLALLSDPSVIADQERFRALSKEYSQLEDVVKSFTAFQQATEDLEAAKEMLNEDDPELKEMAQEEMKEAKSVLETLEDELQILLLPKDPNDDNNAFIEIRAGAGGDEAAIFAGDLFRMYSKYSESNRWQIEVMNTNEGEHGGFKEVIAKISGEGVYGKLKFESGGHRVQRVPETESQGRVHTSACTVIVLPEIPEAEAIEINKADLKVDTFRASGAGGQHVNKTDSAIRITHIPTGIVVECQDQRSQHKNRAQAMSVLSARIQAVEDEKRRSEEESTRRNLVSSGDRSERIRTYNFPQGRMSDHRINLTLYRLNEVMEGVLDVIIEPLILENQADLLAALAED</sequence>
<evidence type="ECO:0000255" key="1">
    <source>
        <dbReference type="HAMAP-Rule" id="MF_00093"/>
    </source>
</evidence>
<evidence type="ECO:0000256" key="2">
    <source>
        <dbReference type="SAM" id="MobiDB-lite"/>
    </source>
</evidence>
<name>RF1_SHEWM</name>
<organism>
    <name type="scientific">Shewanella woodyi (strain ATCC 51908 / MS32)</name>
    <dbReference type="NCBI Taxonomy" id="392500"/>
    <lineage>
        <taxon>Bacteria</taxon>
        <taxon>Pseudomonadati</taxon>
        <taxon>Pseudomonadota</taxon>
        <taxon>Gammaproteobacteria</taxon>
        <taxon>Alteromonadales</taxon>
        <taxon>Shewanellaceae</taxon>
        <taxon>Shewanella</taxon>
    </lineage>
</organism>
<keyword id="KW-0963">Cytoplasm</keyword>
<keyword id="KW-0488">Methylation</keyword>
<keyword id="KW-0648">Protein biosynthesis</keyword>
<keyword id="KW-1185">Reference proteome</keyword>
<reference key="1">
    <citation type="submission" date="2008-02" db="EMBL/GenBank/DDBJ databases">
        <title>Complete sequence of Shewanella woodyi ATCC 51908.</title>
        <authorList>
            <consortium name="US DOE Joint Genome Institute"/>
            <person name="Copeland A."/>
            <person name="Lucas S."/>
            <person name="Lapidus A."/>
            <person name="Glavina del Rio T."/>
            <person name="Dalin E."/>
            <person name="Tice H."/>
            <person name="Bruce D."/>
            <person name="Goodwin L."/>
            <person name="Pitluck S."/>
            <person name="Sims D."/>
            <person name="Brettin T."/>
            <person name="Detter J.C."/>
            <person name="Han C."/>
            <person name="Kuske C.R."/>
            <person name="Schmutz J."/>
            <person name="Larimer F."/>
            <person name="Land M."/>
            <person name="Hauser L."/>
            <person name="Kyrpides N."/>
            <person name="Lykidis A."/>
            <person name="Zhao J.-S."/>
            <person name="Richardson P."/>
        </authorList>
    </citation>
    <scope>NUCLEOTIDE SEQUENCE [LARGE SCALE GENOMIC DNA]</scope>
    <source>
        <strain>ATCC 51908 / MS32</strain>
    </source>
</reference>
<gene>
    <name evidence="1" type="primary">prfA</name>
    <name type="ordered locus">Swoo_3685</name>
</gene>
<dbReference type="EMBL" id="CP000961">
    <property type="protein sequence ID" value="ACA87945.1"/>
    <property type="molecule type" value="Genomic_DNA"/>
</dbReference>
<dbReference type="RefSeq" id="WP_012326277.1">
    <property type="nucleotide sequence ID" value="NC_010506.1"/>
</dbReference>
<dbReference type="SMR" id="B1KDU3"/>
<dbReference type="STRING" id="392500.Swoo_3685"/>
<dbReference type="KEGG" id="swd:Swoo_3685"/>
<dbReference type="eggNOG" id="COG0216">
    <property type="taxonomic scope" value="Bacteria"/>
</dbReference>
<dbReference type="HOGENOM" id="CLU_036856_0_1_6"/>
<dbReference type="Proteomes" id="UP000002168">
    <property type="component" value="Chromosome"/>
</dbReference>
<dbReference type="GO" id="GO:0005737">
    <property type="term" value="C:cytoplasm"/>
    <property type="evidence" value="ECO:0007669"/>
    <property type="project" value="UniProtKB-SubCell"/>
</dbReference>
<dbReference type="GO" id="GO:0016149">
    <property type="term" value="F:translation release factor activity, codon specific"/>
    <property type="evidence" value="ECO:0007669"/>
    <property type="project" value="UniProtKB-UniRule"/>
</dbReference>
<dbReference type="FunFam" id="3.30.160.20:FF:000004">
    <property type="entry name" value="Peptide chain release factor 1"/>
    <property type="match status" value="1"/>
</dbReference>
<dbReference type="FunFam" id="3.30.70.1660:FF:000002">
    <property type="entry name" value="Peptide chain release factor 1"/>
    <property type="match status" value="1"/>
</dbReference>
<dbReference type="FunFam" id="3.30.70.1660:FF:000004">
    <property type="entry name" value="Peptide chain release factor 1"/>
    <property type="match status" value="1"/>
</dbReference>
<dbReference type="Gene3D" id="3.30.160.20">
    <property type="match status" value="1"/>
</dbReference>
<dbReference type="Gene3D" id="3.30.70.1660">
    <property type="match status" value="2"/>
</dbReference>
<dbReference type="Gene3D" id="6.10.140.1950">
    <property type="match status" value="1"/>
</dbReference>
<dbReference type="HAMAP" id="MF_00093">
    <property type="entry name" value="Rel_fac_1"/>
    <property type="match status" value="1"/>
</dbReference>
<dbReference type="InterPro" id="IPR005139">
    <property type="entry name" value="PCRF"/>
</dbReference>
<dbReference type="InterPro" id="IPR000352">
    <property type="entry name" value="Pep_chain_release_fac_I"/>
</dbReference>
<dbReference type="InterPro" id="IPR045853">
    <property type="entry name" value="Pep_chain_release_fac_I_sf"/>
</dbReference>
<dbReference type="InterPro" id="IPR050057">
    <property type="entry name" value="Prokaryotic/Mito_RF"/>
</dbReference>
<dbReference type="InterPro" id="IPR004373">
    <property type="entry name" value="RF-1"/>
</dbReference>
<dbReference type="NCBIfam" id="TIGR00019">
    <property type="entry name" value="prfA"/>
    <property type="match status" value="1"/>
</dbReference>
<dbReference type="NCBIfam" id="NF001859">
    <property type="entry name" value="PRK00591.1"/>
    <property type="match status" value="1"/>
</dbReference>
<dbReference type="PANTHER" id="PTHR43804">
    <property type="entry name" value="LD18447P"/>
    <property type="match status" value="1"/>
</dbReference>
<dbReference type="PANTHER" id="PTHR43804:SF7">
    <property type="entry name" value="LD18447P"/>
    <property type="match status" value="1"/>
</dbReference>
<dbReference type="Pfam" id="PF03462">
    <property type="entry name" value="PCRF"/>
    <property type="match status" value="1"/>
</dbReference>
<dbReference type="Pfam" id="PF00472">
    <property type="entry name" value="RF-1"/>
    <property type="match status" value="1"/>
</dbReference>
<dbReference type="SMART" id="SM00937">
    <property type="entry name" value="PCRF"/>
    <property type="match status" value="1"/>
</dbReference>
<dbReference type="SUPFAM" id="SSF75620">
    <property type="entry name" value="Release factor"/>
    <property type="match status" value="1"/>
</dbReference>
<dbReference type="PROSITE" id="PS00745">
    <property type="entry name" value="RF_PROK_I"/>
    <property type="match status" value="1"/>
</dbReference>
<accession>B1KDU3</accession>
<protein>
    <recommendedName>
        <fullName evidence="1">Peptide chain release factor 1</fullName>
        <shortName evidence="1">RF-1</shortName>
    </recommendedName>
</protein>
<comment type="function">
    <text evidence="1">Peptide chain release factor 1 directs the termination of translation in response to the peptide chain termination codons UAG and UAA.</text>
</comment>
<comment type="subcellular location">
    <subcellularLocation>
        <location evidence="1">Cytoplasm</location>
    </subcellularLocation>
</comment>
<comment type="PTM">
    <text evidence="1">Methylated by PrmC. Methylation increases the termination efficiency of RF1.</text>
</comment>
<comment type="similarity">
    <text evidence="1">Belongs to the prokaryotic/mitochondrial release factor family.</text>
</comment>